<accession>Q1GZJ0</accession>
<proteinExistence type="inferred from homology"/>
<feature type="chain" id="PRO_0000270878" description="Type III pantothenate kinase">
    <location>
        <begin position="1"/>
        <end position="248"/>
    </location>
</feature>
<feature type="active site" description="Proton acceptor" evidence="1">
    <location>
        <position position="96"/>
    </location>
</feature>
<feature type="binding site" evidence="1">
    <location>
        <begin position="8"/>
        <end position="15"/>
    </location>
    <ligand>
        <name>ATP</name>
        <dbReference type="ChEBI" id="CHEBI:30616"/>
    </ligand>
</feature>
<feature type="binding site" evidence="1">
    <location>
        <position position="87"/>
    </location>
    <ligand>
        <name>substrate</name>
    </ligand>
</feature>
<feature type="binding site" evidence="1">
    <location>
        <begin position="94"/>
        <end position="97"/>
    </location>
    <ligand>
        <name>substrate</name>
    </ligand>
</feature>
<feature type="binding site" evidence="1">
    <location>
        <position position="119"/>
    </location>
    <ligand>
        <name>ATP</name>
        <dbReference type="ChEBI" id="CHEBI:30616"/>
    </ligand>
</feature>
<feature type="binding site" evidence="1">
    <location>
        <position position="173"/>
    </location>
    <ligand>
        <name>substrate</name>
    </ligand>
</feature>
<reference key="1">
    <citation type="submission" date="2006-03" db="EMBL/GenBank/DDBJ databases">
        <title>Complete sequence of Methylobacillus flagellatus KT.</title>
        <authorList>
            <consortium name="US DOE Joint Genome Institute"/>
            <person name="Copeland A."/>
            <person name="Lucas S."/>
            <person name="Lapidus A."/>
            <person name="Barry K."/>
            <person name="Detter J.C."/>
            <person name="Glavina del Rio T."/>
            <person name="Hammon N."/>
            <person name="Israni S."/>
            <person name="Dalin E."/>
            <person name="Tice H."/>
            <person name="Pitluck S."/>
            <person name="Brettin T."/>
            <person name="Bruce D."/>
            <person name="Han C."/>
            <person name="Tapia R."/>
            <person name="Saunders E."/>
            <person name="Gilna P."/>
            <person name="Schmutz J."/>
            <person name="Larimer F."/>
            <person name="Land M."/>
            <person name="Kyrpides N."/>
            <person name="Anderson I."/>
            <person name="Richardson P."/>
        </authorList>
    </citation>
    <scope>NUCLEOTIDE SEQUENCE [LARGE SCALE GENOMIC DNA]</scope>
    <source>
        <strain>ATCC 51484 / DSM 6875 / VKM B-1610 / KT</strain>
    </source>
</reference>
<sequence length="248" mass="26467">MSCLLAIDAGNTRTKWAVLQYETGEILQRGVLNDDMPAEWALCERVAVANVAGPNRQALLEARLKLLGLPVRWHASTLHACGVSNGYAIPAQLGVDRWAAMIAAWQHYQRSCLVVNAGTALTVDMIESTAPGQACFLGGIIMPGIRLMQESLASAAANIGAMHGVFRDFPLSTQDAVCSGSLHAGAGAINNLLTLLGERCGEAIPCILSGGDAVALLPLLQKHILHSEFCLEENLVLQGLWYMERGLP</sequence>
<evidence type="ECO:0000255" key="1">
    <source>
        <dbReference type="HAMAP-Rule" id="MF_01274"/>
    </source>
</evidence>
<organism>
    <name type="scientific">Methylobacillus flagellatus (strain ATCC 51484 / DSM 6875 / VKM B-1610 / KT)</name>
    <dbReference type="NCBI Taxonomy" id="265072"/>
    <lineage>
        <taxon>Bacteria</taxon>
        <taxon>Pseudomonadati</taxon>
        <taxon>Pseudomonadota</taxon>
        <taxon>Betaproteobacteria</taxon>
        <taxon>Nitrosomonadales</taxon>
        <taxon>Methylophilaceae</taxon>
        <taxon>Methylobacillus</taxon>
    </lineage>
</organism>
<comment type="function">
    <text evidence="1">Catalyzes the phosphorylation of pantothenate (Pan), the first step in CoA biosynthesis.</text>
</comment>
<comment type="catalytic activity">
    <reaction evidence="1">
        <text>(R)-pantothenate + ATP = (R)-4'-phosphopantothenate + ADP + H(+)</text>
        <dbReference type="Rhea" id="RHEA:16373"/>
        <dbReference type="ChEBI" id="CHEBI:10986"/>
        <dbReference type="ChEBI" id="CHEBI:15378"/>
        <dbReference type="ChEBI" id="CHEBI:29032"/>
        <dbReference type="ChEBI" id="CHEBI:30616"/>
        <dbReference type="ChEBI" id="CHEBI:456216"/>
        <dbReference type="EC" id="2.7.1.33"/>
    </reaction>
</comment>
<comment type="cofactor">
    <cofactor evidence="1">
        <name>NH4(+)</name>
        <dbReference type="ChEBI" id="CHEBI:28938"/>
    </cofactor>
    <cofactor evidence="1">
        <name>K(+)</name>
        <dbReference type="ChEBI" id="CHEBI:29103"/>
    </cofactor>
    <text evidence="1">A monovalent cation. Ammonium or potassium.</text>
</comment>
<comment type="pathway">
    <text evidence="1">Cofactor biosynthesis; coenzyme A biosynthesis; CoA from (R)-pantothenate: step 1/5.</text>
</comment>
<comment type="subunit">
    <text evidence="1">Homodimer.</text>
</comment>
<comment type="subcellular location">
    <subcellularLocation>
        <location evidence="1">Cytoplasm</location>
    </subcellularLocation>
</comment>
<comment type="similarity">
    <text evidence="1">Belongs to the type III pantothenate kinase family.</text>
</comment>
<name>COAX_METFK</name>
<keyword id="KW-0067">ATP-binding</keyword>
<keyword id="KW-0173">Coenzyme A biosynthesis</keyword>
<keyword id="KW-0963">Cytoplasm</keyword>
<keyword id="KW-0418">Kinase</keyword>
<keyword id="KW-0547">Nucleotide-binding</keyword>
<keyword id="KW-0630">Potassium</keyword>
<keyword id="KW-1185">Reference proteome</keyword>
<keyword id="KW-0808">Transferase</keyword>
<dbReference type="EC" id="2.7.1.33" evidence="1"/>
<dbReference type="EMBL" id="CP000284">
    <property type="protein sequence ID" value="ABE50347.1"/>
    <property type="molecule type" value="Genomic_DNA"/>
</dbReference>
<dbReference type="RefSeq" id="WP_011480301.1">
    <property type="nucleotide sequence ID" value="NC_007947.1"/>
</dbReference>
<dbReference type="SMR" id="Q1GZJ0"/>
<dbReference type="STRING" id="265072.Mfla_2080"/>
<dbReference type="KEGG" id="mfa:Mfla_2080"/>
<dbReference type="eggNOG" id="COG1521">
    <property type="taxonomic scope" value="Bacteria"/>
</dbReference>
<dbReference type="HOGENOM" id="CLU_066627_0_0_4"/>
<dbReference type="OrthoDB" id="9781305at2"/>
<dbReference type="UniPathway" id="UPA00241">
    <property type="reaction ID" value="UER00352"/>
</dbReference>
<dbReference type="Proteomes" id="UP000002440">
    <property type="component" value="Chromosome"/>
</dbReference>
<dbReference type="GO" id="GO:0005737">
    <property type="term" value="C:cytoplasm"/>
    <property type="evidence" value="ECO:0007669"/>
    <property type="project" value="UniProtKB-SubCell"/>
</dbReference>
<dbReference type="GO" id="GO:0005524">
    <property type="term" value="F:ATP binding"/>
    <property type="evidence" value="ECO:0007669"/>
    <property type="project" value="UniProtKB-UniRule"/>
</dbReference>
<dbReference type="GO" id="GO:0004594">
    <property type="term" value="F:pantothenate kinase activity"/>
    <property type="evidence" value="ECO:0007669"/>
    <property type="project" value="UniProtKB-UniRule"/>
</dbReference>
<dbReference type="GO" id="GO:0015937">
    <property type="term" value="P:coenzyme A biosynthetic process"/>
    <property type="evidence" value="ECO:0007669"/>
    <property type="project" value="UniProtKB-UniRule"/>
</dbReference>
<dbReference type="CDD" id="cd24015">
    <property type="entry name" value="ASKHA_NBD_PanK-III"/>
    <property type="match status" value="1"/>
</dbReference>
<dbReference type="Gene3D" id="3.30.420.40">
    <property type="match status" value="2"/>
</dbReference>
<dbReference type="HAMAP" id="MF_01274">
    <property type="entry name" value="Pantothen_kinase_3"/>
    <property type="match status" value="1"/>
</dbReference>
<dbReference type="InterPro" id="IPR043129">
    <property type="entry name" value="ATPase_NBD"/>
</dbReference>
<dbReference type="InterPro" id="IPR004619">
    <property type="entry name" value="Type_III_PanK"/>
</dbReference>
<dbReference type="NCBIfam" id="TIGR00671">
    <property type="entry name" value="baf"/>
    <property type="match status" value="1"/>
</dbReference>
<dbReference type="PANTHER" id="PTHR34265">
    <property type="entry name" value="TYPE III PANTOTHENATE KINASE"/>
    <property type="match status" value="1"/>
</dbReference>
<dbReference type="PANTHER" id="PTHR34265:SF1">
    <property type="entry name" value="TYPE III PANTOTHENATE KINASE"/>
    <property type="match status" value="1"/>
</dbReference>
<dbReference type="Pfam" id="PF03309">
    <property type="entry name" value="Pan_kinase"/>
    <property type="match status" value="1"/>
</dbReference>
<dbReference type="SUPFAM" id="SSF53067">
    <property type="entry name" value="Actin-like ATPase domain"/>
    <property type="match status" value="2"/>
</dbReference>
<protein>
    <recommendedName>
        <fullName evidence="1">Type III pantothenate kinase</fullName>
        <ecNumber evidence="1">2.7.1.33</ecNumber>
    </recommendedName>
    <alternativeName>
        <fullName evidence="1">PanK-III</fullName>
    </alternativeName>
    <alternativeName>
        <fullName evidence="1">Pantothenic acid kinase</fullName>
    </alternativeName>
</protein>
<gene>
    <name evidence="1" type="primary">coaX</name>
    <name type="ordered locus">Mfla_2080</name>
</gene>